<name>LOLD_IDILO</name>
<keyword id="KW-0067">ATP-binding</keyword>
<keyword id="KW-0997">Cell inner membrane</keyword>
<keyword id="KW-1003">Cell membrane</keyword>
<keyword id="KW-0472">Membrane</keyword>
<keyword id="KW-0547">Nucleotide-binding</keyword>
<keyword id="KW-1185">Reference proteome</keyword>
<keyword id="KW-1278">Translocase</keyword>
<keyword id="KW-0813">Transport</keyword>
<proteinExistence type="inferred from homology"/>
<sequence>MTDALLRCKELSKSYQDGGDQVTVLKDIDFALQAGEMVAVVGASGSGKSTLLHLLGGLDKPSSGQLFYKDQEMTPWKADKLAQWRNQNLGFVYQFHHLLPEFSALENVAMPQMIAGKSPTEAKQQAEQLLVRVGLEHRLSHRPAQLSGGERQRVAIARAFVNKPQVVLADEPTGNLDGEAAESIYQLMLELNQEMGTAFIVVTHDLQLAEQLQRVEVLKNGILHKEQG</sequence>
<reference key="1">
    <citation type="journal article" date="2004" name="Proc. Natl. Acad. Sci. U.S.A.">
        <title>Genome sequence of the deep-sea gamma-proteobacterium Idiomarina loihiensis reveals amino acid fermentation as a source of carbon and energy.</title>
        <authorList>
            <person name="Hou S."/>
            <person name="Saw J.H."/>
            <person name="Lee K.S."/>
            <person name="Freitas T.A."/>
            <person name="Belisle C."/>
            <person name="Kawarabayasi Y."/>
            <person name="Donachie S.P."/>
            <person name="Pikina A."/>
            <person name="Galperin M.Y."/>
            <person name="Koonin E.V."/>
            <person name="Makarova K.S."/>
            <person name="Omelchenko M.V."/>
            <person name="Sorokin A."/>
            <person name="Wolf Y.I."/>
            <person name="Li Q.X."/>
            <person name="Keum Y.S."/>
            <person name="Campbell S."/>
            <person name="Denery J."/>
            <person name="Aizawa S."/>
            <person name="Shibata S."/>
            <person name="Malahoff A."/>
            <person name="Alam M."/>
        </authorList>
    </citation>
    <scope>NUCLEOTIDE SEQUENCE [LARGE SCALE GENOMIC DNA]</scope>
    <source>
        <strain>ATCC BAA-735 / DSM 15497 / L2-TR</strain>
    </source>
</reference>
<protein>
    <recommendedName>
        <fullName evidence="1">Lipoprotein-releasing system ATP-binding protein LolD</fullName>
        <ecNumber evidence="1">7.6.2.-</ecNumber>
    </recommendedName>
</protein>
<organism>
    <name type="scientific">Idiomarina loihiensis (strain ATCC BAA-735 / DSM 15497 / L2-TR)</name>
    <dbReference type="NCBI Taxonomy" id="283942"/>
    <lineage>
        <taxon>Bacteria</taxon>
        <taxon>Pseudomonadati</taxon>
        <taxon>Pseudomonadota</taxon>
        <taxon>Gammaproteobacteria</taxon>
        <taxon>Alteromonadales</taxon>
        <taxon>Idiomarinaceae</taxon>
        <taxon>Idiomarina</taxon>
    </lineage>
</organism>
<dbReference type="EC" id="7.6.2.-" evidence="1"/>
<dbReference type="EMBL" id="AE017340">
    <property type="protein sequence ID" value="AAV82355.1"/>
    <property type="molecule type" value="Genomic_DNA"/>
</dbReference>
<dbReference type="RefSeq" id="WP_011234760.1">
    <property type="nucleotide sequence ID" value="NC_006512.1"/>
</dbReference>
<dbReference type="SMR" id="Q5QU46"/>
<dbReference type="STRING" id="283942.IL1517"/>
<dbReference type="GeneID" id="41336694"/>
<dbReference type="KEGG" id="ilo:IL1517"/>
<dbReference type="eggNOG" id="COG1136">
    <property type="taxonomic scope" value="Bacteria"/>
</dbReference>
<dbReference type="HOGENOM" id="CLU_000604_1_22_6"/>
<dbReference type="OrthoDB" id="9801477at2"/>
<dbReference type="Proteomes" id="UP000001171">
    <property type="component" value="Chromosome"/>
</dbReference>
<dbReference type="GO" id="GO:0005886">
    <property type="term" value="C:plasma membrane"/>
    <property type="evidence" value="ECO:0007669"/>
    <property type="project" value="UniProtKB-SubCell"/>
</dbReference>
<dbReference type="GO" id="GO:0005524">
    <property type="term" value="F:ATP binding"/>
    <property type="evidence" value="ECO:0007669"/>
    <property type="project" value="UniProtKB-KW"/>
</dbReference>
<dbReference type="GO" id="GO:0016887">
    <property type="term" value="F:ATP hydrolysis activity"/>
    <property type="evidence" value="ECO:0007669"/>
    <property type="project" value="InterPro"/>
</dbReference>
<dbReference type="GO" id="GO:0022857">
    <property type="term" value="F:transmembrane transporter activity"/>
    <property type="evidence" value="ECO:0007669"/>
    <property type="project" value="TreeGrafter"/>
</dbReference>
<dbReference type="GO" id="GO:0044874">
    <property type="term" value="P:lipoprotein localization to outer membrane"/>
    <property type="evidence" value="ECO:0007669"/>
    <property type="project" value="TreeGrafter"/>
</dbReference>
<dbReference type="GO" id="GO:0089705">
    <property type="term" value="P:protein localization to outer membrane"/>
    <property type="evidence" value="ECO:0007669"/>
    <property type="project" value="TreeGrafter"/>
</dbReference>
<dbReference type="CDD" id="cd03255">
    <property type="entry name" value="ABC_MJ0796_LolCDE_FtsE"/>
    <property type="match status" value="1"/>
</dbReference>
<dbReference type="FunFam" id="3.40.50.300:FF:000230">
    <property type="entry name" value="Lipoprotein-releasing system ATP-binding protein LolD"/>
    <property type="match status" value="1"/>
</dbReference>
<dbReference type="Gene3D" id="3.40.50.300">
    <property type="entry name" value="P-loop containing nucleotide triphosphate hydrolases"/>
    <property type="match status" value="1"/>
</dbReference>
<dbReference type="InterPro" id="IPR003593">
    <property type="entry name" value="AAA+_ATPase"/>
</dbReference>
<dbReference type="InterPro" id="IPR003439">
    <property type="entry name" value="ABC_transporter-like_ATP-bd"/>
</dbReference>
<dbReference type="InterPro" id="IPR017871">
    <property type="entry name" value="ABC_transporter-like_CS"/>
</dbReference>
<dbReference type="InterPro" id="IPR015854">
    <property type="entry name" value="ABC_transpr_LolD-like"/>
</dbReference>
<dbReference type="InterPro" id="IPR011924">
    <property type="entry name" value="LolD_lipo_ATP-bd"/>
</dbReference>
<dbReference type="InterPro" id="IPR017911">
    <property type="entry name" value="MacB-like_ATP-bd"/>
</dbReference>
<dbReference type="InterPro" id="IPR027417">
    <property type="entry name" value="P-loop_NTPase"/>
</dbReference>
<dbReference type="NCBIfam" id="TIGR02211">
    <property type="entry name" value="LolD_lipo_ex"/>
    <property type="match status" value="1"/>
</dbReference>
<dbReference type="PANTHER" id="PTHR24220">
    <property type="entry name" value="IMPORT ATP-BINDING PROTEIN"/>
    <property type="match status" value="1"/>
</dbReference>
<dbReference type="PANTHER" id="PTHR24220:SF689">
    <property type="entry name" value="LIPOPROTEIN-RELEASING SYSTEM ATP-BINDING PROTEIN LOLD"/>
    <property type="match status" value="1"/>
</dbReference>
<dbReference type="Pfam" id="PF00005">
    <property type="entry name" value="ABC_tran"/>
    <property type="match status" value="1"/>
</dbReference>
<dbReference type="SMART" id="SM00382">
    <property type="entry name" value="AAA"/>
    <property type="match status" value="1"/>
</dbReference>
<dbReference type="SUPFAM" id="SSF52540">
    <property type="entry name" value="P-loop containing nucleoside triphosphate hydrolases"/>
    <property type="match status" value="1"/>
</dbReference>
<dbReference type="PROSITE" id="PS00211">
    <property type="entry name" value="ABC_TRANSPORTER_1"/>
    <property type="match status" value="1"/>
</dbReference>
<dbReference type="PROSITE" id="PS50893">
    <property type="entry name" value="ABC_TRANSPORTER_2"/>
    <property type="match status" value="1"/>
</dbReference>
<dbReference type="PROSITE" id="PS51244">
    <property type="entry name" value="LOLD"/>
    <property type="match status" value="1"/>
</dbReference>
<accession>Q5QU46</accession>
<gene>
    <name evidence="1" type="primary">lolD</name>
    <name type="ordered locus">IL1517</name>
</gene>
<evidence type="ECO:0000255" key="1">
    <source>
        <dbReference type="HAMAP-Rule" id="MF_01708"/>
    </source>
</evidence>
<comment type="function">
    <text evidence="1">Part of the ABC transporter complex LolCDE involved in the translocation of mature outer membrane-directed lipoproteins, from the inner membrane to the periplasmic chaperone, LolA. Responsible for the formation of the LolA-lipoprotein complex in an ATP-dependent manner.</text>
</comment>
<comment type="subunit">
    <text evidence="1">The complex is composed of two ATP-binding proteins (LolD) and two transmembrane proteins (LolC and LolE).</text>
</comment>
<comment type="subcellular location">
    <subcellularLocation>
        <location evidence="1">Cell inner membrane</location>
        <topology evidence="1">Peripheral membrane protein</topology>
    </subcellularLocation>
</comment>
<comment type="similarity">
    <text evidence="1">Belongs to the ABC transporter superfamily. Lipoprotein translocase (TC 3.A.1.125) family.</text>
</comment>
<feature type="chain" id="PRO_0000272097" description="Lipoprotein-releasing system ATP-binding protein LolD">
    <location>
        <begin position="1"/>
        <end position="228"/>
    </location>
</feature>
<feature type="domain" description="ABC transporter" evidence="1">
    <location>
        <begin position="6"/>
        <end position="228"/>
    </location>
</feature>
<feature type="binding site" evidence="1">
    <location>
        <begin position="42"/>
        <end position="49"/>
    </location>
    <ligand>
        <name>ATP</name>
        <dbReference type="ChEBI" id="CHEBI:30616"/>
    </ligand>
</feature>